<evidence type="ECO:0000250" key="1"/>
<evidence type="ECO:0000255" key="2"/>
<evidence type="ECO:0000255" key="3">
    <source>
        <dbReference type="PROSITE-ProRule" id="PRU01230"/>
    </source>
</evidence>
<evidence type="ECO:0000305" key="4"/>
<reference key="1">
    <citation type="journal article" date="1997" name="J. Neurochem.">
        <title>Molecular cloning of a lobster G alpha(q) protein expressed in neurons of olfactory organ and brain.</title>
        <authorList>
            <person name="McClintock T.S."/>
            <person name="Xu F."/>
            <person name="Quintero J."/>
            <person name="Gress A.M."/>
            <person name="Landers T.M."/>
        </authorList>
    </citation>
    <scope>NUCLEOTIDE SEQUENCE [MRNA]</scope>
    <source>
        <tissue>Olfactory organ</tissue>
    </source>
</reference>
<accession>P91950</accession>
<feature type="chain" id="PRO_0000203765" description="Guanine nucleotide-binding protein G(q) subunit alpha">
    <location>
        <begin position="1"/>
        <end position="353"/>
    </location>
</feature>
<feature type="domain" description="G-alpha" evidence="3">
    <location>
        <begin position="32"/>
        <end position="353"/>
    </location>
</feature>
<feature type="region of interest" description="G1 motif" evidence="3">
    <location>
        <begin position="35"/>
        <end position="48"/>
    </location>
</feature>
<feature type="region of interest" description="G2 motif" evidence="3">
    <location>
        <begin position="172"/>
        <end position="180"/>
    </location>
</feature>
<feature type="region of interest" description="G3 motif" evidence="3">
    <location>
        <begin position="195"/>
        <end position="204"/>
    </location>
</feature>
<feature type="region of interest" description="G4 motif" evidence="3">
    <location>
        <begin position="264"/>
        <end position="271"/>
    </location>
</feature>
<feature type="region of interest" description="G5 motif" evidence="3">
    <location>
        <begin position="323"/>
        <end position="328"/>
    </location>
</feature>
<feature type="binding site" evidence="1">
    <location>
        <begin position="40"/>
        <end position="47"/>
    </location>
    <ligand>
        <name>GTP</name>
        <dbReference type="ChEBI" id="CHEBI:37565"/>
    </ligand>
</feature>
<feature type="binding site" evidence="1">
    <location>
        <position position="47"/>
    </location>
    <ligand>
        <name>Mg(2+)</name>
        <dbReference type="ChEBI" id="CHEBI:18420"/>
    </ligand>
</feature>
<feature type="binding site" evidence="1">
    <location>
        <begin position="174"/>
        <end position="180"/>
    </location>
    <ligand>
        <name>GTP</name>
        <dbReference type="ChEBI" id="CHEBI:37565"/>
    </ligand>
</feature>
<feature type="binding site" evidence="1">
    <location>
        <position position="180"/>
    </location>
    <ligand>
        <name>Mg(2+)</name>
        <dbReference type="ChEBI" id="CHEBI:18420"/>
    </ligand>
</feature>
<feature type="binding site" evidence="1">
    <location>
        <begin position="199"/>
        <end position="203"/>
    </location>
    <ligand>
        <name>GTP</name>
        <dbReference type="ChEBI" id="CHEBI:37565"/>
    </ligand>
</feature>
<feature type="binding site" evidence="1">
    <location>
        <begin position="268"/>
        <end position="271"/>
    </location>
    <ligand>
        <name>GTP</name>
        <dbReference type="ChEBI" id="CHEBI:37565"/>
    </ligand>
</feature>
<feature type="binding site" evidence="1">
    <location>
        <position position="325"/>
    </location>
    <ligand>
        <name>GTP</name>
        <dbReference type="ChEBI" id="CHEBI:37565"/>
    </ligand>
</feature>
<feature type="lipid moiety-binding region" description="S-palmitoyl cysteine" evidence="2">
    <location>
        <position position="3"/>
    </location>
</feature>
<feature type="lipid moiety-binding region" description="S-palmitoyl cysteine" evidence="2">
    <location>
        <position position="4"/>
    </location>
</feature>
<comment type="function">
    <text>Guanine nucleotide-binding proteins (G proteins) are involved as modulators or transducers in various transmembrane signaling systems.</text>
</comment>
<comment type="subunit">
    <text>G proteins are composed of 3 units; alpha, beta and gamma. The alpha chain contains the guanine nucleotide binding site.</text>
</comment>
<comment type="similarity">
    <text evidence="4">Belongs to the G-alpha family. G(q) subfamily.</text>
</comment>
<keyword id="KW-0342">GTP-binding</keyword>
<keyword id="KW-0449">Lipoprotein</keyword>
<keyword id="KW-0460">Magnesium</keyword>
<keyword id="KW-0479">Metal-binding</keyword>
<keyword id="KW-0547">Nucleotide-binding</keyword>
<keyword id="KW-0564">Palmitate</keyword>
<keyword id="KW-0807">Transducer</keyword>
<name>GNAQ_HOMAM</name>
<proteinExistence type="evidence at transcript level"/>
<organism>
    <name type="scientific">Homarus americanus</name>
    <name type="common">American lobster</name>
    <dbReference type="NCBI Taxonomy" id="6706"/>
    <lineage>
        <taxon>Eukaryota</taxon>
        <taxon>Metazoa</taxon>
        <taxon>Ecdysozoa</taxon>
        <taxon>Arthropoda</taxon>
        <taxon>Crustacea</taxon>
        <taxon>Multicrustacea</taxon>
        <taxon>Malacostraca</taxon>
        <taxon>Eumalacostraca</taxon>
        <taxon>Eucarida</taxon>
        <taxon>Decapoda</taxon>
        <taxon>Pleocyemata</taxon>
        <taxon>Astacidea</taxon>
        <taxon>Nephropoidea</taxon>
        <taxon>Nephropidae</taxon>
        <taxon>Homarus</taxon>
    </lineage>
</organism>
<dbReference type="EMBL" id="U89139">
    <property type="protein sequence ID" value="AAB49314.1"/>
    <property type="molecule type" value="mRNA"/>
</dbReference>
<dbReference type="SMR" id="P91950"/>
<dbReference type="OrthoDB" id="5817230at2759"/>
<dbReference type="GO" id="GO:0005737">
    <property type="term" value="C:cytoplasm"/>
    <property type="evidence" value="ECO:0007669"/>
    <property type="project" value="TreeGrafter"/>
</dbReference>
<dbReference type="GO" id="GO:0005834">
    <property type="term" value="C:heterotrimeric G-protein complex"/>
    <property type="evidence" value="ECO:0007669"/>
    <property type="project" value="TreeGrafter"/>
</dbReference>
<dbReference type="GO" id="GO:0001664">
    <property type="term" value="F:G protein-coupled receptor binding"/>
    <property type="evidence" value="ECO:0007669"/>
    <property type="project" value="InterPro"/>
</dbReference>
<dbReference type="GO" id="GO:0031683">
    <property type="term" value="F:G-protein beta/gamma-subunit complex binding"/>
    <property type="evidence" value="ECO:0007669"/>
    <property type="project" value="InterPro"/>
</dbReference>
<dbReference type="GO" id="GO:0005525">
    <property type="term" value="F:GTP binding"/>
    <property type="evidence" value="ECO:0007669"/>
    <property type="project" value="UniProtKB-KW"/>
</dbReference>
<dbReference type="GO" id="GO:0003924">
    <property type="term" value="F:GTPase activity"/>
    <property type="evidence" value="ECO:0007669"/>
    <property type="project" value="InterPro"/>
</dbReference>
<dbReference type="GO" id="GO:0046872">
    <property type="term" value="F:metal ion binding"/>
    <property type="evidence" value="ECO:0007669"/>
    <property type="project" value="UniProtKB-KW"/>
</dbReference>
<dbReference type="GO" id="GO:0007188">
    <property type="term" value="P:adenylate cyclase-modulating G protein-coupled receptor signaling pathway"/>
    <property type="evidence" value="ECO:0007669"/>
    <property type="project" value="TreeGrafter"/>
</dbReference>
<dbReference type="CDD" id="cd00066">
    <property type="entry name" value="G-alpha"/>
    <property type="match status" value="1"/>
</dbReference>
<dbReference type="FunFam" id="3.40.50.300:FF:003977">
    <property type="entry name" value="Guanine nucleotide-binding protein G(q) subunit alpha"/>
    <property type="match status" value="1"/>
</dbReference>
<dbReference type="FunFam" id="1.10.400.10:FF:000002">
    <property type="entry name" value="guanine nucleotide-binding protein G(Q) subunit alpha"/>
    <property type="match status" value="1"/>
</dbReference>
<dbReference type="FunFam" id="3.40.50.300:FF:000692">
    <property type="entry name" value="Guanine nucleotide-binding protein subunit alpha"/>
    <property type="match status" value="1"/>
</dbReference>
<dbReference type="Gene3D" id="1.10.400.10">
    <property type="entry name" value="GI Alpha 1, domain 2-like"/>
    <property type="match status" value="1"/>
</dbReference>
<dbReference type="Gene3D" id="3.40.50.300">
    <property type="entry name" value="P-loop containing nucleotide triphosphate hydrolases"/>
    <property type="match status" value="1"/>
</dbReference>
<dbReference type="InterPro" id="IPR000654">
    <property type="entry name" value="Gprotein_alpha_Q"/>
</dbReference>
<dbReference type="InterPro" id="IPR001019">
    <property type="entry name" value="Gprotein_alpha_su"/>
</dbReference>
<dbReference type="InterPro" id="IPR011025">
    <property type="entry name" value="GproteinA_insert"/>
</dbReference>
<dbReference type="InterPro" id="IPR027417">
    <property type="entry name" value="P-loop_NTPase"/>
</dbReference>
<dbReference type="PANTHER" id="PTHR10218">
    <property type="entry name" value="GTP-BINDING PROTEIN ALPHA SUBUNIT"/>
    <property type="match status" value="1"/>
</dbReference>
<dbReference type="PANTHER" id="PTHR10218:SF329">
    <property type="entry name" value="GUANINE NUCLEOTIDE-BINDING PROTEIN G(Q) SUBUNIT ALPHA"/>
    <property type="match status" value="1"/>
</dbReference>
<dbReference type="Pfam" id="PF00503">
    <property type="entry name" value="G-alpha"/>
    <property type="match status" value="1"/>
</dbReference>
<dbReference type="PRINTS" id="PR00318">
    <property type="entry name" value="GPROTEINA"/>
</dbReference>
<dbReference type="PRINTS" id="PR00442">
    <property type="entry name" value="GPROTEINAQ"/>
</dbReference>
<dbReference type="SMART" id="SM00275">
    <property type="entry name" value="G_alpha"/>
    <property type="match status" value="1"/>
</dbReference>
<dbReference type="SUPFAM" id="SSF52540">
    <property type="entry name" value="P-loop containing nucleoside triphosphate hydrolases"/>
    <property type="match status" value="1"/>
</dbReference>
<dbReference type="SUPFAM" id="SSF47895">
    <property type="entry name" value="Transducin (alpha subunit), insertion domain"/>
    <property type="match status" value="1"/>
</dbReference>
<dbReference type="PROSITE" id="PS51882">
    <property type="entry name" value="G_ALPHA"/>
    <property type="match status" value="1"/>
</dbReference>
<sequence>MACCLSEEAKEQKRINQEIERQLRKDKRDARRELKLLLLGTGESGKSTFIKQMRIIHGAGYSDEDKRGFIKLVFQNIFMAMQSMIRAMDLLQISYGDSANIEHADLVRSVDYESVTTFEEPYVTAMNSLWQDTGIQHCYDRRREYQLTDSAKYYLTDLDRIAAKDYVSTLQDILRVRAPTTGIIEYPFDLEEIRFRMVDVGGQRSERRKWIHCFENVTSIIFLVALSEYDQILFESDNENRMEESKALFKTIITYPWFQHSSVILFLNKKDLLEEKIMYSHLVDYFPEYDGPRKDAIAAREFILRMFVELNPDPEKIIYSHFTCATDTENIRFVFAAVKDTILQLNLKEYNLV</sequence>
<protein>
    <recommendedName>
        <fullName>Guanine nucleotide-binding protein G(q) subunit alpha</fullName>
    </recommendedName>
    <alternativeName>
        <fullName>Guanine nucleotide-binding protein alpha-q</fullName>
    </alternativeName>
</protein>